<dbReference type="EMBL" id="Z36941">
    <property type="protein sequence ID" value="CAA85401.1"/>
    <property type="molecule type" value="Genomic_DNA"/>
</dbReference>
<dbReference type="EMBL" id="L25924">
    <property type="protein sequence ID" value="AAA22643.1"/>
    <property type="molecule type" value="Genomic_DNA"/>
</dbReference>
<dbReference type="EMBL" id="Z70177">
    <property type="protein sequence ID" value="CAA94047.1"/>
    <property type="molecule type" value="Genomic_DNA"/>
</dbReference>
<dbReference type="EMBL" id="AL009126">
    <property type="protein sequence ID" value="CAB13136.1"/>
    <property type="molecule type" value="Genomic_DNA"/>
</dbReference>
<dbReference type="PIR" id="G69730">
    <property type="entry name" value="G69730"/>
</dbReference>
<dbReference type="RefSeq" id="NP_389162.1">
    <property type="nucleotide sequence ID" value="NC_000964.3"/>
</dbReference>
<dbReference type="RefSeq" id="WP_003232655.1">
    <property type="nucleotide sequence ID" value="NZ_OZ025638.1"/>
</dbReference>
<dbReference type="SMR" id="P39798"/>
<dbReference type="FunCoup" id="P39798">
    <property type="interactions" value="53"/>
</dbReference>
<dbReference type="IntAct" id="P39798">
    <property type="interactions" value="40"/>
</dbReference>
<dbReference type="STRING" id="224308.BSU12790"/>
<dbReference type="TCDB" id="1.E.31.1.14">
    <property type="family name" value="the spp1 holin (spp1 holin) family"/>
</dbReference>
<dbReference type="PaxDb" id="224308-BSU12790"/>
<dbReference type="EnsemblBacteria" id="CAB13136">
    <property type="protein sequence ID" value="CAB13136"/>
    <property type="gene ID" value="BSU_12790"/>
</dbReference>
<dbReference type="GeneID" id="936210"/>
<dbReference type="KEGG" id="bsu:BSU12790"/>
<dbReference type="PATRIC" id="fig|224308.179.peg.1387"/>
<dbReference type="eggNOG" id="ENOG5033MX4">
    <property type="taxonomic scope" value="Bacteria"/>
</dbReference>
<dbReference type="InParanoid" id="P39798"/>
<dbReference type="OrthoDB" id="2943262at2"/>
<dbReference type="BioCyc" id="BSUB:BSU12790-MONOMER"/>
<dbReference type="Proteomes" id="UP000001570">
    <property type="component" value="Chromosome"/>
</dbReference>
<dbReference type="GO" id="GO:0005886">
    <property type="term" value="C:plasma membrane"/>
    <property type="evidence" value="ECO:0007669"/>
    <property type="project" value="UniProtKB-SubCell"/>
</dbReference>
<dbReference type="Gene3D" id="1.20.5.340">
    <property type="match status" value="1"/>
</dbReference>
<dbReference type="InterPro" id="IPR019715">
    <property type="entry name" value="Haemolysin_XhlA"/>
</dbReference>
<dbReference type="Pfam" id="PF10779">
    <property type="entry name" value="XhlA"/>
    <property type="match status" value="1"/>
</dbReference>
<sequence length="89" mass="9997">MQQEADVNVFQQDLADMKGEHKALEQRVSALERVSDRQDQQIMTLNEKLNKIEENTTWIKRTITGAIITAVSTGIIGGAIAIMYSLLQH</sequence>
<accession>P39798</accession>
<name>XHLA_BACSU</name>
<feature type="chain" id="PRO_0000066006" description="Protein XhlA">
    <location>
        <begin position="1"/>
        <end position="89"/>
    </location>
</feature>
<feature type="transmembrane region" description="Helical" evidence="1">
    <location>
        <begin position="63"/>
        <end position="83"/>
    </location>
</feature>
<gene>
    <name type="primary">xhlA</name>
    <name type="ordered locus">BSU12790</name>
</gene>
<protein>
    <recommendedName>
        <fullName>Protein XhlA</fullName>
    </recommendedName>
</protein>
<proteinExistence type="predicted"/>
<organism>
    <name type="scientific">Bacillus subtilis (strain 168)</name>
    <dbReference type="NCBI Taxonomy" id="224308"/>
    <lineage>
        <taxon>Bacteria</taxon>
        <taxon>Bacillati</taxon>
        <taxon>Bacillota</taxon>
        <taxon>Bacilli</taxon>
        <taxon>Bacillales</taxon>
        <taxon>Bacillaceae</taxon>
        <taxon>Bacillus</taxon>
    </lineage>
</organism>
<keyword id="KW-1003">Cell membrane</keyword>
<keyword id="KW-0472">Membrane</keyword>
<keyword id="KW-1185">Reference proteome</keyword>
<keyword id="KW-0812">Transmembrane</keyword>
<keyword id="KW-1133">Transmembrane helix</keyword>
<comment type="function">
    <text>Associated with cell lysis upon induction of PbsX.</text>
</comment>
<comment type="subcellular location">
    <subcellularLocation>
        <location evidence="2">Cell membrane</location>
        <topology evidence="2">Single-pass membrane protein</topology>
    </subcellularLocation>
</comment>
<comment type="similarity">
    <text evidence="2">To B.licheniformis xpaF1 and xpaL1.</text>
</comment>
<evidence type="ECO:0000255" key="1"/>
<evidence type="ECO:0000305" key="2"/>
<reference key="1">
    <citation type="submission" date="1994-09" db="EMBL/GenBank/DDBJ databases">
        <authorList>
            <person name="Krogh S."/>
            <person name="Joergensen S.T."/>
            <person name="Diderichsen B."/>
            <person name="Devine K.M."/>
        </authorList>
    </citation>
    <scope>NUCLEOTIDE SEQUENCE [GENOMIC DNA]</scope>
    <source>
        <strain>168 / SO113</strain>
    </source>
</reference>
<reference key="2">
    <citation type="journal article" date="1994" name="Microbiology">
        <title>Lytic enzymes associated with defective prophages of Bacillus subtilis: sequencing and characterization of the region comprising the N-acetylmuramoyl-L-alanine amidase gene of prophage PBSX.</title>
        <authorList>
            <person name="Longchamp P.F."/>
            <person name="Mauel C."/>
            <person name="Karamata D."/>
        </authorList>
    </citation>
    <scope>NUCLEOTIDE SEQUENCE [GENOMIC DNA]</scope>
    <source>
        <strain>168</strain>
    </source>
</reference>
<reference key="3">
    <citation type="journal article" date="1998" name="J. Bacteriol.">
        <title>Lysis genes of the Bacillus subtilis defective prophage PBSX.</title>
        <authorList>
            <person name="Krogh S."/>
            <person name="Jorgensen S.T."/>
            <person name="Devine K.M."/>
        </authorList>
    </citation>
    <scope>NUCLEOTIDE SEQUENCE [GENOMIC DNA]</scope>
    <source>
        <strain>168</strain>
    </source>
</reference>
<reference key="4">
    <citation type="journal article" date="1997" name="Nature">
        <title>The complete genome sequence of the Gram-positive bacterium Bacillus subtilis.</title>
        <authorList>
            <person name="Kunst F."/>
            <person name="Ogasawara N."/>
            <person name="Moszer I."/>
            <person name="Albertini A.M."/>
            <person name="Alloni G."/>
            <person name="Azevedo V."/>
            <person name="Bertero M.G."/>
            <person name="Bessieres P."/>
            <person name="Bolotin A."/>
            <person name="Borchert S."/>
            <person name="Borriss R."/>
            <person name="Boursier L."/>
            <person name="Brans A."/>
            <person name="Braun M."/>
            <person name="Brignell S.C."/>
            <person name="Bron S."/>
            <person name="Brouillet S."/>
            <person name="Bruschi C.V."/>
            <person name="Caldwell B."/>
            <person name="Capuano V."/>
            <person name="Carter N.M."/>
            <person name="Choi S.-K."/>
            <person name="Codani J.-J."/>
            <person name="Connerton I.F."/>
            <person name="Cummings N.J."/>
            <person name="Daniel R.A."/>
            <person name="Denizot F."/>
            <person name="Devine K.M."/>
            <person name="Duesterhoeft A."/>
            <person name="Ehrlich S.D."/>
            <person name="Emmerson P.T."/>
            <person name="Entian K.-D."/>
            <person name="Errington J."/>
            <person name="Fabret C."/>
            <person name="Ferrari E."/>
            <person name="Foulger D."/>
            <person name="Fritz C."/>
            <person name="Fujita M."/>
            <person name="Fujita Y."/>
            <person name="Fuma S."/>
            <person name="Galizzi A."/>
            <person name="Galleron N."/>
            <person name="Ghim S.-Y."/>
            <person name="Glaser P."/>
            <person name="Goffeau A."/>
            <person name="Golightly E.J."/>
            <person name="Grandi G."/>
            <person name="Guiseppi G."/>
            <person name="Guy B.J."/>
            <person name="Haga K."/>
            <person name="Haiech J."/>
            <person name="Harwood C.R."/>
            <person name="Henaut A."/>
            <person name="Hilbert H."/>
            <person name="Holsappel S."/>
            <person name="Hosono S."/>
            <person name="Hullo M.-F."/>
            <person name="Itaya M."/>
            <person name="Jones L.-M."/>
            <person name="Joris B."/>
            <person name="Karamata D."/>
            <person name="Kasahara Y."/>
            <person name="Klaerr-Blanchard M."/>
            <person name="Klein C."/>
            <person name="Kobayashi Y."/>
            <person name="Koetter P."/>
            <person name="Koningstein G."/>
            <person name="Krogh S."/>
            <person name="Kumano M."/>
            <person name="Kurita K."/>
            <person name="Lapidus A."/>
            <person name="Lardinois S."/>
            <person name="Lauber J."/>
            <person name="Lazarevic V."/>
            <person name="Lee S.-M."/>
            <person name="Levine A."/>
            <person name="Liu H."/>
            <person name="Masuda S."/>
            <person name="Mauel C."/>
            <person name="Medigue C."/>
            <person name="Medina N."/>
            <person name="Mellado R.P."/>
            <person name="Mizuno M."/>
            <person name="Moestl D."/>
            <person name="Nakai S."/>
            <person name="Noback M."/>
            <person name="Noone D."/>
            <person name="O'Reilly M."/>
            <person name="Ogawa K."/>
            <person name="Ogiwara A."/>
            <person name="Oudega B."/>
            <person name="Park S.-H."/>
            <person name="Parro V."/>
            <person name="Pohl T.M."/>
            <person name="Portetelle D."/>
            <person name="Porwollik S."/>
            <person name="Prescott A.M."/>
            <person name="Presecan E."/>
            <person name="Pujic P."/>
            <person name="Purnelle B."/>
            <person name="Rapoport G."/>
            <person name="Rey M."/>
            <person name="Reynolds S."/>
            <person name="Rieger M."/>
            <person name="Rivolta C."/>
            <person name="Rocha E."/>
            <person name="Roche B."/>
            <person name="Rose M."/>
            <person name="Sadaie Y."/>
            <person name="Sato T."/>
            <person name="Scanlan E."/>
            <person name="Schleich S."/>
            <person name="Schroeter R."/>
            <person name="Scoffone F."/>
            <person name="Sekiguchi J."/>
            <person name="Sekowska A."/>
            <person name="Seror S.J."/>
            <person name="Serror P."/>
            <person name="Shin B.-S."/>
            <person name="Soldo B."/>
            <person name="Sorokin A."/>
            <person name="Tacconi E."/>
            <person name="Takagi T."/>
            <person name="Takahashi H."/>
            <person name="Takemaru K."/>
            <person name="Takeuchi M."/>
            <person name="Tamakoshi A."/>
            <person name="Tanaka T."/>
            <person name="Terpstra P."/>
            <person name="Tognoni A."/>
            <person name="Tosato V."/>
            <person name="Uchiyama S."/>
            <person name="Vandenbol M."/>
            <person name="Vannier F."/>
            <person name="Vassarotti A."/>
            <person name="Viari A."/>
            <person name="Wambutt R."/>
            <person name="Wedler E."/>
            <person name="Wedler H."/>
            <person name="Weitzenegger T."/>
            <person name="Winters P."/>
            <person name="Wipat A."/>
            <person name="Yamamoto H."/>
            <person name="Yamane K."/>
            <person name="Yasumoto K."/>
            <person name="Yata K."/>
            <person name="Yoshida K."/>
            <person name="Yoshikawa H.-F."/>
            <person name="Zumstein E."/>
            <person name="Yoshikawa H."/>
            <person name="Danchin A."/>
        </authorList>
    </citation>
    <scope>NUCLEOTIDE SEQUENCE [LARGE SCALE GENOMIC DNA]</scope>
    <source>
        <strain>168</strain>
    </source>
</reference>